<comment type="function">
    <text evidence="1">ATP-dependent RNA helicase involved nonsense-mediated mRNA decay and ribosome biogenesis through rRNA processing.</text>
</comment>
<comment type="catalytic activity">
    <reaction>
        <text>ATP + H2O = ADP + phosphate + H(+)</text>
        <dbReference type="Rhea" id="RHEA:13065"/>
        <dbReference type="ChEBI" id="CHEBI:15377"/>
        <dbReference type="ChEBI" id="CHEBI:15378"/>
        <dbReference type="ChEBI" id="CHEBI:30616"/>
        <dbReference type="ChEBI" id="CHEBI:43474"/>
        <dbReference type="ChEBI" id="CHEBI:456216"/>
        <dbReference type="EC" id="3.6.4.13"/>
    </reaction>
</comment>
<comment type="subunit">
    <text evidence="1">Associates with polysomes.</text>
</comment>
<comment type="subcellular location">
    <subcellularLocation>
        <location evidence="1">Cytoplasm</location>
    </subcellularLocation>
    <subcellularLocation>
        <location evidence="1">Nucleus</location>
    </subcellularLocation>
</comment>
<comment type="domain">
    <text>The Q motif is unique to and characteristic of the DEAD box family of RNA helicases and controls ATP binding and hydrolysis.</text>
</comment>
<comment type="similarity">
    <text evidence="5">Belongs to the DEAD box helicase family. DDX5/DBP2 subfamily.</text>
</comment>
<keyword id="KW-0067">ATP-binding</keyword>
<keyword id="KW-0963">Cytoplasm</keyword>
<keyword id="KW-0347">Helicase</keyword>
<keyword id="KW-0378">Hydrolase</keyword>
<keyword id="KW-0866">Nonsense-mediated mRNA decay</keyword>
<keyword id="KW-0547">Nucleotide-binding</keyword>
<keyword id="KW-0539">Nucleus</keyword>
<keyword id="KW-1185">Reference proteome</keyword>
<keyword id="KW-0690">Ribosome biogenesis</keyword>
<keyword id="KW-0694">RNA-binding</keyword>
<keyword id="KW-0698">rRNA processing</keyword>
<feature type="chain" id="PRO_0000232166" description="ATP-dependent RNA helicase DBP2">
    <location>
        <begin position="1"/>
        <end position="562"/>
    </location>
</feature>
<feature type="domain" description="Helicase ATP-binding" evidence="2">
    <location>
        <begin position="158"/>
        <end position="333"/>
    </location>
</feature>
<feature type="domain" description="Helicase C-terminal" evidence="3">
    <location>
        <begin position="358"/>
        <end position="508"/>
    </location>
</feature>
<feature type="region of interest" description="Disordered" evidence="4">
    <location>
        <begin position="1"/>
        <end position="70"/>
    </location>
</feature>
<feature type="region of interest" description="Disordered" evidence="4">
    <location>
        <begin position="500"/>
        <end position="562"/>
    </location>
</feature>
<feature type="region of interest" description="RNA-binding RGG-box" evidence="1">
    <location>
        <begin position="518"/>
        <end position="546"/>
    </location>
</feature>
<feature type="short sequence motif" description="Q motif">
    <location>
        <begin position="127"/>
        <end position="155"/>
    </location>
</feature>
<feature type="short sequence motif" description="DEAD box">
    <location>
        <begin position="281"/>
        <end position="284"/>
    </location>
</feature>
<feature type="compositionally biased region" description="Low complexity" evidence="4">
    <location>
        <begin position="1"/>
        <end position="13"/>
    </location>
</feature>
<feature type="compositionally biased region" description="Gly residues" evidence="4">
    <location>
        <begin position="14"/>
        <end position="43"/>
    </location>
</feature>
<feature type="compositionally biased region" description="Gly residues" evidence="4">
    <location>
        <begin position="50"/>
        <end position="65"/>
    </location>
</feature>
<feature type="compositionally biased region" description="Gly residues" evidence="4">
    <location>
        <begin position="520"/>
        <end position="548"/>
    </location>
</feature>
<feature type="binding site" evidence="2">
    <location>
        <begin position="171"/>
        <end position="178"/>
    </location>
    <ligand>
        <name>ATP</name>
        <dbReference type="ChEBI" id="CHEBI:30616"/>
    </ligand>
</feature>
<gene>
    <name type="primary">DBP2</name>
    <name type="ordered locus">CAALFM_CR02530WA</name>
    <name type="ORF">CaO19.171</name>
    <name type="ORF">CaO19.7804</name>
</gene>
<sequence length="562" mass="61281">MSYNNGGYNNRNGGSYGGGYGGGGSRGGRDGYSGGGRGGGYGGGDRDQGGYRGGRFSGGGRGGGRFNDAPRQELTAPQWDLEQLPKFEKNFYSEHPDVAARSDRDIEQFRKENEMTVKGHDIPHPITTFDEAGFPDYVLQEVKDQGFPKPTPIQCQGWPMALSGRDMIGIAATGSGKTLSYCLPSIVHINAQPQLQYGDGPIVLVLAPTRELAVQIQTECSKFGKSSRIRNTCVYGGAPKGPQIRDLARGVEICIATPGRLIDMLEAGKTNLKRVTYLVLDEADRMLDMGFEPQIRKIVDQIRPDRQTLMWSATWPKEVQQLTRDYLNDPIQVTIGSLELAASHTITQLVEVIDEFSKRDRLVKHLESALNEKDNKILVFASTKRTCDEITTYLRSDGWPALAIHGDKEQNERDWVLDEFRKGKTSIMVATDVAARGIDVKGITHVINYDMPGNIEDYVHRIGRTGRGGASGTAISFFTEGNSKLGGDLCKIMREANQTVPPELQRFDRRSYGSHMRFGQGRGGRGGRGGRGGRGGRGGYGGGGGYRSTGGNSAPLGGNRRF</sequence>
<name>DBP2_CANAL</name>
<accession>Q59LU0</accession>
<accession>A0A1D8PS76</accession>
<organism>
    <name type="scientific">Candida albicans (strain SC5314 / ATCC MYA-2876)</name>
    <name type="common">Yeast</name>
    <dbReference type="NCBI Taxonomy" id="237561"/>
    <lineage>
        <taxon>Eukaryota</taxon>
        <taxon>Fungi</taxon>
        <taxon>Dikarya</taxon>
        <taxon>Ascomycota</taxon>
        <taxon>Saccharomycotina</taxon>
        <taxon>Pichiomycetes</taxon>
        <taxon>Debaryomycetaceae</taxon>
        <taxon>Candida/Lodderomyces clade</taxon>
        <taxon>Candida</taxon>
    </lineage>
</organism>
<dbReference type="EC" id="3.6.4.13"/>
<dbReference type="EMBL" id="CP017630">
    <property type="protein sequence ID" value="AOW30997.1"/>
    <property type="molecule type" value="Genomic_DNA"/>
</dbReference>
<dbReference type="RefSeq" id="XP_019331065.1">
    <property type="nucleotide sequence ID" value="XM_019475520.1"/>
</dbReference>
<dbReference type="SMR" id="Q59LU0"/>
<dbReference type="FunCoup" id="Q59LU0">
    <property type="interactions" value="1265"/>
</dbReference>
<dbReference type="STRING" id="237561.Q59LU0"/>
<dbReference type="EnsemblFungi" id="CR_02530W_A-T">
    <property type="protein sequence ID" value="CR_02530W_A-T-p1"/>
    <property type="gene ID" value="CR_02530W_A"/>
</dbReference>
<dbReference type="GeneID" id="3647692"/>
<dbReference type="KEGG" id="cal:CAALFM_CR02530WA"/>
<dbReference type="CGD" id="CAL0000194603">
    <property type="gene designation" value="DBP2"/>
</dbReference>
<dbReference type="VEuPathDB" id="FungiDB:CR_02530W_A"/>
<dbReference type="eggNOG" id="KOG0331">
    <property type="taxonomic scope" value="Eukaryota"/>
</dbReference>
<dbReference type="HOGENOM" id="CLU_003041_16_9_1"/>
<dbReference type="InParanoid" id="Q59LU0"/>
<dbReference type="OMA" id="STMPKFE"/>
<dbReference type="OrthoDB" id="196131at2759"/>
<dbReference type="PRO" id="PR:Q59LU0"/>
<dbReference type="Proteomes" id="UP000000559">
    <property type="component" value="Chromosome R"/>
</dbReference>
<dbReference type="GO" id="GO:0005737">
    <property type="term" value="C:cytoplasm"/>
    <property type="evidence" value="ECO:0000318"/>
    <property type="project" value="GO_Central"/>
</dbReference>
<dbReference type="GO" id="GO:0005634">
    <property type="term" value="C:nucleus"/>
    <property type="evidence" value="ECO:0000318"/>
    <property type="project" value="GO_Central"/>
</dbReference>
<dbReference type="GO" id="GO:1990904">
    <property type="term" value="C:ribonucleoprotein complex"/>
    <property type="evidence" value="ECO:0000318"/>
    <property type="project" value="GO_Central"/>
</dbReference>
<dbReference type="GO" id="GO:0005524">
    <property type="term" value="F:ATP binding"/>
    <property type="evidence" value="ECO:0007669"/>
    <property type="project" value="UniProtKB-KW"/>
</dbReference>
<dbReference type="GO" id="GO:0016887">
    <property type="term" value="F:ATP hydrolysis activity"/>
    <property type="evidence" value="ECO:0007669"/>
    <property type="project" value="RHEA"/>
</dbReference>
<dbReference type="GO" id="GO:0051880">
    <property type="term" value="F:G-quadruplex DNA binding"/>
    <property type="evidence" value="ECO:0007669"/>
    <property type="project" value="EnsemblFungi"/>
</dbReference>
<dbReference type="GO" id="GO:0002151">
    <property type="term" value="F:G-quadruplex RNA binding"/>
    <property type="evidence" value="ECO:0007669"/>
    <property type="project" value="EnsemblFungi"/>
</dbReference>
<dbReference type="GO" id="GO:0003729">
    <property type="term" value="F:mRNA binding"/>
    <property type="evidence" value="ECO:0000318"/>
    <property type="project" value="GO_Central"/>
</dbReference>
<dbReference type="GO" id="GO:0003724">
    <property type="term" value="F:RNA helicase activity"/>
    <property type="evidence" value="ECO:0000318"/>
    <property type="project" value="GO_Central"/>
</dbReference>
<dbReference type="GO" id="GO:0030515">
    <property type="term" value="F:snoRNA binding"/>
    <property type="evidence" value="ECO:0007669"/>
    <property type="project" value="EnsemblFungi"/>
</dbReference>
<dbReference type="GO" id="GO:0000380">
    <property type="term" value="P:alternative mRNA splicing, via spliceosome"/>
    <property type="evidence" value="ECO:0000318"/>
    <property type="project" value="GO_Central"/>
</dbReference>
<dbReference type="GO" id="GO:0071042">
    <property type="term" value="P:nuclear polyadenylation-dependent mRNA catabolic process"/>
    <property type="evidence" value="ECO:0007669"/>
    <property type="project" value="EnsemblFungi"/>
</dbReference>
<dbReference type="GO" id="GO:0000184">
    <property type="term" value="P:nuclear-transcribed mRNA catabolic process, nonsense-mediated decay"/>
    <property type="evidence" value="ECO:0007669"/>
    <property type="project" value="UniProtKB-KW"/>
</dbReference>
<dbReference type="GO" id="GO:0006364">
    <property type="term" value="P:rRNA processing"/>
    <property type="evidence" value="ECO:0000318"/>
    <property type="project" value="GO_Central"/>
</dbReference>
<dbReference type="GO" id="GO:0006369">
    <property type="term" value="P:termination of RNA polymerase II transcription"/>
    <property type="evidence" value="ECO:0007669"/>
    <property type="project" value="EnsemblFungi"/>
</dbReference>
<dbReference type="CDD" id="cd17966">
    <property type="entry name" value="DEADc_DDX5_DDX17"/>
    <property type="match status" value="1"/>
</dbReference>
<dbReference type="CDD" id="cd18787">
    <property type="entry name" value="SF2_C_DEAD"/>
    <property type="match status" value="1"/>
</dbReference>
<dbReference type="FunFam" id="3.40.50.300:FF:000008">
    <property type="entry name" value="ATP-dependent RNA helicase RhlB"/>
    <property type="match status" value="1"/>
</dbReference>
<dbReference type="FunFam" id="3.40.50.300:FF:000079">
    <property type="entry name" value="probable ATP-dependent RNA helicase DDX17"/>
    <property type="match status" value="1"/>
</dbReference>
<dbReference type="Gene3D" id="3.40.50.300">
    <property type="entry name" value="P-loop containing nucleotide triphosphate hydrolases"/>
    <property type="match status" value="2"/>
</dbReference>
<dbReference type="InterPro" id="IPR011545">
    <property type="entry name" value="DEAD/DEAH_box_helicase_dom"/>
</dbReference>
<dbReference type="InterPro" id="IPR014001">
    <property type="entry name" value="Helicase_ATP-bd"/>
</dbReference>
<dbReference type="InterPro" id="IPR001650">
    <property type="entry name" value="Helicase_C-like"/>
</dbReference>
<dbReference type="InterPro" id="IPR027417">
    <property type="entry name" value="P-loop_NTPase"/>
</dbReference>
<dbReference type="InterPro" id="IPR000629">
    <property type="entry name" value="RNA-helicase_DEAD-box_CS"/>
</dbReference>
<dbReference type="InterPro" id="IPR014014">
    <property type="entry name" value="RNA_helicase_DEAD_Q_motif"/>
</dbReference>
<dbReference type="PANTHER" id="PTHR47958">
    <property type="entry name" value="ATP-DEPENDENT RNA HELICASE DBP3"/>
    <property type="match status" value="1"/>
</dbReference>
<dbReference type="Pfam" id="PF00270">
    <property type="entry name" value="DEAD"/>
    <property type="match status" value="1"/>
</dbReference>
<dbReference type="Pfam" id="PF00271">
    <property type="entry name" value="Helicase_C"/>
    <property type="match status" value="1"/>
</dbReference>
<dbReference type="SMART" id="SM00487">
    <property type="entry name" value="DEXDc"/>
    <property type="match status" value="1"/>
</dbReference>
<dbReference type="SMART" id="SM00490">
    <property type="entry name" value="HELICc"/>
    <property type="match status" value="1"/>
</dbReference>
<dbReference type="SUPFAM" id="SSF52540">
    <property type="entry name" value="P-loop containing nucleoside triphosphate hydrolases"/>
    <property type="match status" value="1"/>
</dbReference>
<dbReference type="PROSITE" id="PS00039">
    <property type="entry name" value="DEAD_ATP_HELICASE"/>
    <property type="match status" value="1"/>
</dbReference>
<dbReference type="PROSITE" id="PS51192">
    <property type="entry name" value="HELICASE_ATP_BIND_1"/>
    <property type="match status" value="1"/>
</dbReference>
<dbReference type="PROSITE" id="PS51194">
    <property type="entry name" value="HELICASE_CTER"/>
    <property type="match status" value="1"/>
</dbReference>
<dbReference type="PROSITE" id="PS51195">
    <property type="entry name" value="Q_MOTIF"/>
    <property type="match status" value="1"/>
</dbReference>
<protein>
    <recommendedName>
        <fullName>ATP-dependent RNA helicase DBP2</fullName>
        <ecNumber>3.6.4.13</ecNumber>
    </recommendedName>
</protein>
<evidence type="ECO:0000250" key="1"/>
<evidence type="ECO:0000255" key="2">
    <source>
        <dbReference type="PROSITE-ProRule" id="PRU00541"/>
    </source>
</evidence>
<evidence type="ECO:0000255" key="3">
    <source>
        <dbReference type="PROSITE-ProRule" id="PRU00542"/>
    </source>
</evidence>
<evidence type="ECO:0000256" key="4">
    <source>
        <dbReference type="SAM" id="MobiDB-lite"/>
    </source>
</evidence>
<evidence type="ECO:0000305" key="5"/>
<proteinExistence type="inferred from homology"/>
<reference key="1">
    <citation type="journal article" date="2004" name="Proc. Natl. Acad. Sci. U.S.A.">
        <title>The diploid genome sequence of Candida albicans.</title>
        <authorList>
            <person name="Jones T."/>
            <person name="Federspiel N.A."/>
            <person name="Chibana H."/>
            <person name="Dungan J."/>
            <person name="Kalman S."/>
            <person name="Magee B.B."/>
            <person name="Newport G."/>
            <person name="Thorstenson Y.R."/>
            <person name="Agabian N."/>
            <person name="Magee P.T."/>
            <person name="Davis R.W."/>
            <person name="Scherer S."/>
        </authorList>
    </citation>
    <scope>NUCLEOTIDE SEQUENCE [LARGE SCALE GENOMIC DNA]</scope>
    <source>
        <strain>SC5314 / ATCC MYA-2876</strain>
    </source>
</reference>
<reference key="2">
    <citation type="journal article" date="2007" name="Genome Biol.">
        <title>Assembly of the Candida albicans genome into sixteen supercontigs aligned on the eight chromosomes.</title>
        <authorList>
            <person name="van het Hoog M."/>
            <person name="Rast T.J."/>
            <person name="Martchenko M."/>
            <person name="Grindle S."/>
            <person name="Dignard D."/>
            <person name="Hogues H."/>
            <person name="Cuomo C."/>
            <person name="Berriman M."/>
            <person name="Scherer S."/>
            <person name="Magee B.B."/>
            <person name="Whiteway M."/>
            <person name="Chibana H."/>
            <person name="Nantel A."/>
            <person name="Magee P.T."/>
        </authorList>
    </citation>
    <scope>GENOME REANNOTATION</scope>
    <source>
        <strain>SC5314 / ATCC MYA-2876</strain>
    </source>
</reference>
<reference key="3">
    <citation type="journal article" date="2013" name="Genome Biol.">
        <title>Assembly of a phased diploid Candida albicans genome facilitates allele-specific measurements and provides a simple model for repeat and indel structure.</title>
        <authorList>
            <person name="Muzzey D."/>
            <person name="Schwartz K."/>
            <person name="Weissman J.S."/>
            <person name="Sherlock G."/>
        </authorList>
    </citation>
    <scope>NUCLEOTIDE SEQUENCE [LARGE SCALE GENOMIC DNA]</scope>
    <scope>GENOME REANNOTATION</scope>
    <source>
        <strain>SC5314 / ATCC MYA-2876</strain>
    </source>
</reference>